<protein>
    <recommendedName>
        <fullName evidence="1">Ribosome maturation factor RimP</fullName>
    </recommendedName>
</protein>
<proteinExistence type="inferred from homology"/>
<dbReference type="EMBL" id="CP001217">
    <property type="protein sequence ID" value="ACJ07555.1"/>
    <property type="molecule type" value="Genomic_DNA"/>
</dbReference>
<dbReference type="SMR" id="B6JKX7"/>
<dbReference type="KEGG" id="hpp:HPP12_0398"/>
<dbReference type="HOGENOM" id="CLU_070525_2_2_7"/>
<dbReference type="Proteomes" id="UP000008198">
    <property type="component" value="Chromosome"/>
</dbReference>
<dbReference type="GO" id="GO:0005829">
    <property type="term" value="C:cytosol"/>
    <property type="evidence" value="ECO:0007669"/>
    <property type="project" value="TreeGrafter"/>
</dbReference>
<dbReference type="GO" id="GO:0000028">
    <property type="term" value="P:ribosomal small subunit assembly"/>
    <property type="evidence" value="ECO:0007669"/>
    <property type="project" value="TreeGrafter"/>
</dbReference>
<dbReference type="GO" id="GO:0006412">
    <property type="term" value="P:translation"/>
    <property type="evidence" value="ECO:0007669"/>
    <property type="project" value="TreeGrafter"/>
</dbReference>
<dbReference type="CDD" id="cd01734">
    <property type="entry name" value="YlxS_C"/>
    <property type="match status" value="1"/>
</dbReference>
<dbReference type="FunFam" id="3.30.300.70:FF:000005">
    <property type="entry name" value="Ribosome maturation factor RimP"/>
    <property type="match status" value="1"/>
</dbReference>
<dbReference type="Gene3D" id="3.30.300.70">
    <property type="entry name" value="RimP-like superfamily, N-terminal"/>
    <property type="match status" value="1"/>
</dbReference>
<dbReference type="HAMAP" id="MF_01077">
    <property type="entry name" value="RimP"/>
    <property type="match status" value="1"/>
</dbReference>
<dbReference type="InterPro" id="IPR003728">
    <property type="entry name" value="Ribosome_maturation_RimP"/>
</dbReference>
<dbReference type="InterPro" id="IPR028998">
    <property type="entry name" value="RimP_C"/>
</dbReference>
<dbReference type="InterPro" id="IPR036847">
    <property type="entry name" value="RimP_C_sf"/>
</dbReference>
<dbReference type="InterPro" id="IPR028989">
    <property type="entry name" value="RimP_N"/>
</dbReference>
<dbReference type="InterPro" id="IPR035956">
    <property type="entry name" value="RimP_N_sf"/>
</dbReference>
<dbReference type="PANTHER" id="PTHR33867">
    <property type="entry name" value="RIBOSOME MATURATION FACTOR RIMP"/>
    <property type="match status" value="1"/>
</dbReference>
<dbReference type="PANTHER" id="PTHR33867:SF1">
    <property type="entry name" value="RIBOSOME MATURATION FACTOR RIMP"/>
    <property type="match status" value="1"/>
</dbReference>
<dbReference type="Pfam" id="PF17384">
    <property type="entry name" value="DUF150_C"/>
    <property type="match status" value="1"/>
</dbReference>
<dbReference type="Pfam" id="PF02576">
    <property type="entry name" value="RimP_N"/>
    <property type="match status" value="1"/>
</dbReference>
<dbReference type="SUPFAM" id="SSF74942">
    <property type="entry name" value="YhbC-like, C-terminal domain"/>
    <property type="match status" value="1"/>
</dbReference>
<dbReference type="SUPFAM" id="SSF75420">
    <property type="entry name" value="YhbC-like, N-terminal domain"/>
    <property type="match status" value="1"/>
</dbReference>
<name>RIMP_HELP2</name>
<accession>B6JKX7</accession>
<feature type="chain" id="PRO_1000136770" description="Ribosome maturation factor RimP">
    <location>
        <begin position="1"/>
        <end position="146"/>
    </location>
</feature>
<comment type="function">
    <text evidence="1">Required for maturation of 30S ribosomal subunits.</text>
</comment>
<comment type="subcellular location">
    <subcellularLocation>
        <location evidence="1">Cytoplasm</location>
    </subcellularLocation>
</comment>
<comment type="similarity">
    <text evidence="1">Belongs to the RimP family.</text>
</comment>
<keyword id="KW-0963">Cytoplasm</keyword>
<keyword id="KW-0690">Ribosome biogenesis</keyword>
<organism>
    <name type="scientific">Helicobacter pylori (strain P12)</name>
    <dbReference type="NCBI Taxonomy" id="570508"/>
    <lineage>
        <taxon>Bacteria</taxon>
        <taxon>Pseudomonadati</taxon>
        <taxon>Campylobacterota</taxon>
        <taxon>Epsilonproteobacteria</taxon>
        <taxon>Campylobacterales</taxon>
        <taxon>Helicobacteraceae</taxon>
        <taxon>Helicobacter</taxon>
    </lineage>
</organism>
<sequence length="146" mass="16713">MTKRIEEKIEGVIESLGYLLYDVSLVKENEHNILRVSLKNPNGAVSLDICQQVSEIISPLLDVCDFIQDAYILEVSSMGLERVLKTPKHFKLSLGEKVEVKLTNKESFQAVLKDANDWSADFELENHAIKSVEYKDLKKVKTLFEW</sequence>
<reference key="1">
    <citation type="submission" date="2008-10" db="EMBL/GenBank/DDBJ databases">
        <title>The complete genome sequence of Helicobacter pylori strain P12.</title>
        <authorList>
            <person name="Fischer W."/>
            <person name="Windhager L."/>
            <person name="Karnholz A."/>
            <person name="Zeiller M."/>
            <person name="Zimmer R."/>
            <person name="Haas R."/>
        </authorList>
    </citation>
    <scope>NUCLEOTIDE SEQUENCE [LARGE SCALE GENOMIC DNA]</scope>
    <source>
        <strain>P12</strain>
    </source>
</reference>
<gene>
    <name evidence="1" type="primary">rimP</name>
    <name type="ordered locus">HPP12_0398</name>
</gene>
<evidence type="ECO:0000255" key="1">
    <source>
        <dbReference type="HAMAP-Rule" id="MF_01077"/>
    </source>
</evidence>